<proteinExistence type="evidence at protein level"/>
<dbReference type="EC" id="3.6.4.-"/>
<dbReference type="EC" id="2.1.1.-"/>
<dbReference type="EMBL" id="D12537">
    <property type="protein sequence ID" value="BAA02105.1"/>
    <property type="molecule type" value="Genomic_RNA"/>
</dbReference>
<dbReference type="PIR" id="JQ2169">
    <property type="entry name" value="JQ2169"/>
</dbReference>
<dbReference type="SMR" id="Q83264"/>
<dbReference type="GO" id="GO:0044167">
    <property type="term" value="C:host cell endoplasmic reticulum membrane"/>
    <property type="evidence" value="ECO:0007669"/>
    <property type="project" value="UniProtKB-SubCell"/>
</dbReference>
<dbReference type="GO" id="GO:0016020">
    <property type="term" value="C:membrane"/>
    <property type="evidence" value="ECO:0007669"/>
    <property type="project" value="UniProtKB-KW"/>
</dbReference>
<dbReference type="GO" id="GO:0005524">
    <property type="term" value="F:ATP binding"/>
    <property type="evidence" value="ECO:0007669"/>
    <property type="project" value="UniProtKB-KW"/>
</dbReference>
<dbReference type="GO" id="GO:0004386">
    <property type="term" value="F:helicase activity"/>
    <property type="evidence" value="ECO:0007669"/>
    <property type="project" value="UniProtKB-KW"/>
</dbReference>
<dbReference type="GO" id="GO:0016817">
    <property type="term" value="F:hydrolase activity, acting on acid anhydrides"/>
    <property type="evidence" value="ECO:0007669"/>
    <property type="project" value="InterPro"/>
</dbReference>
<dbReference type="GO" id="GO:0008174">
    <property type="term" value="F:mRNA methyltransferase activity"/>
    <property type="evidence" value="ECO:0007669"/>
    <property type="project" value="InterPro"/>
</dbReference>
<dbReference type="GO" id="GO:0003723">
    <property type="term" value="F:RNA binding"/>
    <property type="evidence" value="ECO:0007669"/>
    <property type="project" value="InterPro"/>
</dbReference>
<dbReference type="GO" id="GO:0032259">
    <property type="term" value="P:methylation"/>
    <property type="evidence" value="ECO:0007669"/>
    <property type="project" value="UniProtKB-KW"/>
</dbReference>
<dbReference type="GO" id="GO:0016556">
    <property type="term" value="P:mRNA modification"/>
    <property type="evidence" value="ECO:0007669"/>
    <property type="project" value="InterPro"/>
</dbReference>
<dbReference type="GO" id="GO:0006396">
    <property type="term" value="P:RNA processing"/>
    <property type="evidence" value="ECO:0007669"/>
    <property type="project" value="InterPro"/>
</dbReference>
<dbReference type="Gene3D" id="3.40.50.300">
    <property type="entry name" value="P-loop containing nucleotide triphosphate hydrolases"/>
    <property type="match status" value="2"/>
</dbReference>
<dbReference type="InterPro" id="IPR027351">
    <property type="entry name" value="(+)RNA_virus_helicase_core_dom"/>
</dbReference>
<dbReference type="InterPro" id="IPR021002">
    <property type="entry name" value="1a_necrotic_phenotyp-det_dom"/>
</dbReference>
<dbReference type="InterPro" id="IPR002588">
    <property type="entry name" value="Alphavirus-like_MT_dom"/>
</dbReference>
<dbReference type="InterPro" id="IPR022184">
    <property type="entry name" value="CMV_1a_C"/>
</dbReference>
<dbReference type="InterPro" id="IPR027417">
    <property type="entry name" value="P-loop_NTPase"/>
</dbReference>
<dbReference type="Pfam" id="PF12467">
    <property type="entry name" value="CMV_1a"/>
    <property type="match status" value="1"/>
</dbReference>
<dbReference type="Pfam" id="PF12503">
    <property type="entry name" value="CMV_1a_C"/>
    <property type="match status" value="1"/>
</dbReference>
<dbReference type="Pfam" id="PF01443">
    <property type="entry name" value="Viral_helicase1"/>
    <property type="match status" value="1"/>
</dbReference>
<dbReference type="Pfam" id="PF01660">
    <property type="entry name" value="Vmethyltransf"/>
    <property type="match status" value="1"/>
</dbReference>
<dbReference type="SUPFAM" id="SSF52540">
    <property type="entry name" value="P-loop containing nucleoside triphosphate hydrolases"/>
    <property type="match status" value="1"/>
</dbReference>
<dbReference type="PROSITE" id="PS51743">
    <property type="entry name" value="ALPHAVIRUS_MT"/>
    <property type="match status" value="1"/>
</dbReference>
<dbReference type="PROSITE" id="PS51657">
    <property type="entry name" value="PSRV_HELICASE"/>
    <property type="match status" value="1"/>
</dbReference>
<comment type="function">
    <text evidence="1">Involved in the virus replication. Contains a helicase domain and a methyltransferase domain. The methyltransferase domain is probably involved in viral RNA capping. Involved in the formation of ER membrane spherular invaginations in which RNA replication complexes form (By similarity).</text>
</comment>
<comment type="subunit">
    <text evidence="1 5">Interacts with RNA-directed RNA polymerase 2a (By similarity). Interacts with Arabidopsis TIP1-1, TIP1-2, TIP1-3, TIP2-1, TIP2-2 and TIP2-3.</text>
</comment>
<comment type="subcellular location">
    <subcellularLocation>
        <location evidence="1">Host endoplasmic reticulum membrane</location>
        <topology evidence="1">Peripheral membrane protein</topology>
    </subcellularLocation>
</comment>
<comment type="similarity">
    <text evidence="6">Belongs to the bromoviridae replication protein 1a family.</text>
</comment>
<sequence>MATSSFNINELVASHGDKGLLATALVDKTTHEQLEEQLQHQRRGRKVYIRNVLGVKDSEVIRNRYGGKYDLHLTQQEFASQGLAGALRLCGTLDCLDSFPSSGLRQDLVLDFGGSWVTHYLRGHNVHCCSPCLGIRDKMRHSERLMNMRKIILNDPQQFDGRQPDFCTQPAADCKVQAHFAISIHGGYDMGFRGLCEAMNAHGTTILKGTMMFDGAMMFDDQGVIPELNCQWRKIRSAFSETEDVTPLVGKLNSTVFSRVRKFKTMVAFDFINESTMSYVHDWENIKSFLTDQTYSYRGMTYGIERCVIHAGIMTYKIIGVPGMCPPELIRHCIWFPSIKDYVGLKIPASQDLVEWKTVRILTSTLRETEEIAMRCYNDKKAWMEQFKVILGVLSAKSSTIVINGMSMQSGERIDINDYHYIGFAILLHTKMKYEQLGKMYDMWNASSISKWFAALTRPLRVFFSSVVHALFPTLRPREEKEFLIKLSTFVTFNEECSFDGGEEWDVISSAAYVATQAVTDGKILAAQKAEKLAEKLAQPVSEVSDSPETSSQTPDDTADVCGKEREVSELDSLSAQTRSPITRVAERATAMLEYAAYEKHLHDTTVSNLKRIWNMAGGDDKRSFLEGNLKFVFDSYFTVDPMVNIHFSTGRWVRPVPEGIVYPVGYNERGLGPKSDGELYIVNSECVICNSESLSTVYGRSLQTPTGTISQVDGVAGCGKTMPIKSIFEPSTDMIVTANKKSAQDVRMALFKSSDSKEACTFVRTADSVLLNECPTVSRVLEDEVVLLHFGQLCAVMSKLKAVRAICFGDAEQIAFSSRDASFDMRFSKIIPDETSDADTTFRSPQDVVPLVRLMATKALPKGTHSKYTKWVSQSKVRRSVTSRAIASVTLVDLDSSRFYITMTQADKASLISRAKEMNLPKTFWNERIKTVHESQGISEDHVTLVRLKSTKCDLFKQFSYCLVALTRHKVTFRYEYCGVLNGDLIASVARA</sequence>
<organismHost>
    <name type="scientific">Cucumis sativus</name>
    <name type="common">Cucumber</name>
    <dbReference type="NCBI Taxonomy" id="3659"/>
</organismHost>
<organismHost>
    <name type="scientific">Nicotiana tabacum</name>
    <name type="common">Common tobacco</name>
    <dbReference type="NCBI Taxonomy" id="4097"/>
</organismHost>
<organismHost>
    <name type="scientific">Solanum lycopersicum</name>
    <name type="common">Tomato</name>
    <name type="synonym">Lycopersicon esculentum</name>
    <dbReference type="NCBI Taxonomy" id="4081"/>
</organismHost>
<keyword id="KW-0067">ATP-binding</keyword>
<keyword id="KW-0347">Helicase</keyword>
<keyword id="KW-1038">Host endoplasmic reticulum</keyword>
<keyword id="KW-1043">Host membrane</keyword>
<keyword id="KW-0378">Hydrolase</keyword>
<keyword id="KW-0472">Membrane</keyword>
<keyword id="KW-0489">Methyltransferase</keyword>
<keyword id="KW-0547">Nucleotide-binding</keyword>
<keyword id="KW-0808">Transferase</keyword>
<reference key="1">
    <citation type="journal article" date="1990" name="Nihon Shokubutsu Byori Gakkaiho">
        <title>Complete nucleotide sequence of RNA1 of cucumber mosaic virus Y strain and evolutionary relationships among genome RNAs of the virus strains.</title>
        <authorList>
            <person name="Kataoka J."/>
            <person name="Masuta C."/>
            <person name="Takanami Y."/>
        </authorList>
    </citation>
    <scope>NUCLEOTIDE SEQUENCE [GENOMIC RNA]</scope>
</reference>
<reference key="2">
    <citation type="journal article" date="2006" name="J. Gen. Virol.">
        <title>Arabidopsis tonoplast proteins TIP1 and TIP2 interact with the cucumber mosaic virus 1a replication protein.</title>
        <authorList>
            <person name="Kim M.J."/>
            <person name="Kim H.R."/>
            <person name="Paek K.-H."/>
        </authorList>
    </citation>
    <scope>INTERACTION WITH ARABIDOPSIS TIP1-1; TIP1-2; TIP1-3; TIP2-1; TIP2-2 AND TIP2-3</scope>
    <source>
        <strain>Isolate Kor</strain>
    </source>
</reference>
<name>1A_CMVY</name>
<evidence type="ECO:0000250" key="1"/>
<evidence type="ECO:0000255" key="2"/>
<evidence type="ECO:0000255" key="3">
    <source>
        <dbReference type="PROSITE-ProRule" id="PRU01079"/>
    </source>
</evidence>
<evidence type="ECO:0000256" key="4">
    <source>
        <dbReference type="SAM" id="MobiDB-lite"/>
    </source>
</evidence>
<evidence type="ECO:0000269" key="5">
    <source>
    </source>
</evidence>
<evidence type="ECO:0000305" key="6"/>
<protein>
    <recommendedName>
        <fullName>Replication protein 1a</fullName>
    </recommendedName>
    <domain>
        <recommendedName>
            <fullName>ATP-dependent helicase</fullName>
            <ecNumber>3.6.4.-</ecNumber>
        </recommendedName>
    </domain>
    <domain>
        <recommendedName>
            <fullName>Methyltransferase</fullName>
            <ecNumber>2.1.1.-</ecNumber>
        </recommendedName>
    </domain>
</protein>
<gene>
    <name type="ORF">ORF1a</name>
</gene>
<feature type="chain" id="PRO_0000083264" description="Replication protein 1a">
    <location>
        <begin position="1"/>
        <end position="993"/>
    </location>
</feature>
<feature type="domain" description="Alphavirus-like MT" evidence="3">
    <location>
        <begin position="72"/>
        <end position="290"/>
    </location>
</feature>
<feature type="domain" description="(+)RNA virus helicase ATP-binding">
    <location>
        <begin position="683"/>
        <end position="839"/>
    </location>
</feature>
<feature type="domain" description="(+)RNA virus helicase C-terminal">
    <location>
        <begin position="840"/>
        <end position="993"/>
    </location>
</feature>
<feature type="region of interest" description="Methyltransferase">
    <location>
        <begin position="51"/>
        <end position="409"/>
    </location>
</feature>
<feature type="region of interest" description="Disordered" evidence="4">
    <location>
        <begin position="538"/>
        <end position="561"/>
    </location>
</feature>
<feature type="region of interest" description="ATP-dependent helicase">
    <location>
        <begin position="713"/>
        <end position="976"/>
    </location>
</feature>
<feature type="compositionally biased region" description="Polar residues" evidence="4">
    <location>
        <begin position="542"/>
        <end position="556"/>
    </location>
</feature>
<feature type="binding site" evidence="2">
    <location>
        <begin position="715"/>
        <end position="722"/>
    </location>
    <ligand>
        <name>ATP</name>
        <dbReference type="ChEBI" id="CHEBI:30616"/>
    </ligand>
</feature>
<accession>Q83264</accession>
<organism>
    <name type="scientific">Cucumber mosaic virus (strain Y)</name>
    <name type="common">CMV</name>
    <dbReference type="NCBI Taxonomy" id="12312"/>
    <lineage>
        <taxon>Viruses</taxon>
        <taxon>Riboviria</taxon>
        <taxon>Orthornavirae</taxon>
        <taxon>Kitrinoviricota</taxon>
        <taxon>Alsuviricetes</taxon>
        <taxon>Martellivirales</taxon>
        <taxon>Bromoviridae</taxon>
        <taxon>Cucumovirus</taxon>
        <taxon>Cucumber mosaic virus</taxon>
    </lineage>
</organism>